<reference key="1">
    <citation type="journal article" date="2008" name="Infect. Immun.">
        <title>Genomic comparison of virulent Rickettsia rickettsii Sheila Smith and avirulent Rickettsia rickettsii Iowa.</title>
        <authorList>
            <person name="Ellison D.W."/>
            <person name="Clark T.R."/>
            <person name="Sturdevant D.E."/>
            <person name="Virtaneva K."/>
            <person name="Porcella S.F."/>
            <person name="Hackstadt T."/>
        </authorList>
    </citation>
    <scope>NUCLEOTIDE SEQUENCE [LARGE SCALE GENOMIC DNA]</scope>
    <source>
        <strain>Iowa</strain>
    </source>
</reference>
<proteinExistence type="inferred from homology"/>
<sequence length="340" mass="38261">MLSLSKNWNTLIKPNKVAYENFPETNNKAKIVVEPLERGFGLTLGNAMRRVLLSSLQGAAITSIKIPAIEHEFSSIPGVKEDVSEVILNIKGIEVKMHVAEKRIMKLKATGPCVVTAGMIETGHDVEILNPDHVICDLAKDKQLEMELTCKVGKGYVLSTNNYEDNLPIGEIAIDALFNPVKSVTYKVENTRVGQVTDYDKLIMFVETNGAVLPEMAVGLAARILQEQLQLFISFEEQEEDKQVKTDALPFSPYLLKRVDELELSVRSANCLKNDNIIYIGDLVKRTEADMLRTPNFGRKSLNEIKEILAKFNLRFGMDVPDWPPENMQELSKRYEDSYN</sequence>
<comment type="function">
    <text evidence="1">DNA-dependent RNA polymerase catalyzes the transcription of DNA into RNA using the four ribonucleoside triphosphates as substrates.</text>
</comment>
<comment type="catalytic activity">
    <reaction evidence="1">
        <text>RNA(n) + a ribonucleoside 5'-triphosphate = RNA(n+1) + diphosphate</text>
        <dbReference type="Rhea" id="RHEA:21248"/>
        <dbReference type="Rhea" id="RHEA-COMP:14527"/>
        <dbReference type="Rhea" id="RHEA-COMP:17342"/>
        <dbReference type="ChEBI" id="CHEBI:33019"/>
        <dbReference type="ChEBI" id="CHEBI:61557"/>
        <dbReference type="ChEBI" id="CHEBI:140395"/>
        <dbReference type="EC" id="2.7.7.6"/>
    </reaction>
</comment>
<comment type="subunit">
    <text evidence="1">Homodimer. The RNAP catalytic core consists of 2 alpha, 1 beta, 1 beta' and 1 omega subunit. When a sigma factor is associated with the core the holoenzyme is formed, which can initiate transcription.</text>
</comment>
<comment type="domain">
    <text evidence="1">The N-terminal domain is essential for RNAP assembly and basal transcription, whereas the C-terminal domain is involved in interaction with transcriptional regulators and with upstream promoter elements.</text>
</comment>
<comment type="similarity">
    <text evidence="1">Belongs to the RNA polymerase alpha chain family.</text>
</comment>
<name>RPOA_RICRO</name>
<evidence type="ECO:0000255" key="1">
    <source>
        <dbReference type="HAMAP-Rule" id="MF_00059"/>
    </source>
</evidence>
<feature type="chain" id="PRO_1000075014" description="DNA-directed RNA polymerase subunit alpha">
    <location>
        <begin position="1"/>
        <end position="340"/>
    </location>
</feature>
<feature type="region of interest" description="Alpha N-terminal domain (alpha-NTD)" evidence="1">
    <location>
        <begin position="1"/>
        <end position="236"/>
    </location>
</feature>
<feature type="region of interest" description="Alpha C-terminal domain (alpha-CTD)" evidence="1">
    <location>
        <begin position="251"/>
        <end position="340"/>
    </location>
</feature>
<gene>
    <name evidence="1" type="primary">rpoA</name>
    <name type="ordered locus">RrIowa_1173</name>
</gene>
<dbReference type="EC" id="2.7.7.6" evidence="1"/>
<dbReference type="EMBL" id="CP000766">
    <property type="protein sequence ID" value="ABY72946.1"/>
    <property type="molecule type" value="Genomic_DNA"/>
</dbReference>
<dbReference type="RefSeq" id="WP_012151133.1">
    <property type="nucleotide sequence ID" value="NC_010263.3"/>
</dbReference>
<dbReference type="SMR" id="B0BUN6"/>
<dbReference type="KEGG" id="rrj:RrIowa_1173"/>
<dbReference type="eggNOG" id="COG0202">
    <property type="taxonomic scope" value="Bacteria"/>
</dbReference>
<dbReference type="HOGENOM" id="CLU_053084_0_0_5"/>
<dbReference type="Proteomes" id="UP000000796">
    <property type="component" value="Chromosome"/>
</dbReference>
<dbReference type="GO" id="GO:0005737">
    <property type="term" value="C:cytoplasm"/>
    <property type="evidence" value="ECO:0007669"/>
    <property type="project" value="UniProtKB-ARBA"/>
</dbReference>
<dbReference type="GO" id="GO:0000428">
    <property type="term" value="C:DNA-directed RNA polymerase complex"/>
    <property type="evidence" value="ECO:0007669"/>
    <property type="project" value="UniProtKB-KW"/>
</dbReference>
<dbReference type="GO" id="GO:0003677">
    <property type="term" value="F:DNA binding"/>
    <property type="evidence" value="ECO:0007669"/>
    <property type="project" value="UniProtKB-UniRule"/>
</dbReference>
<dbReference type="GO" id="GO:0003899">
    <property type="term" value="F:DNA-directed RNA polymerase activity"/>
    <property type="evidence" value="ECO:0007669"/>
    <property type="project" value="UniProtKB-UniRule"/>
</dbReference>
<dbReference type="GO" id="GO:0046983">
    <property type="term" value="F:protein dimerization activity"/>
    <property type="evidence" value="ECO:0007669"/>
    <property type="project" value="InterPro"/>
</dbReference>
<dbReference type="GO" id="GO:0006351">
    <property type="term" value="P:DNA-templated transcription"/>
    <property type="evidence" value="ECO:0007669"/>
    <property type="project" value="UniProtKB-UniRule"/>
</dbReference>
<dbReference type="CDD" id="cd06928">
    <property type="entry name" value="RNAP_alpha_NTD"/>
    <property type="match status" value="1"/>
</dbReference>
<dbReference type="FunFam" id="1.10.150.20:FF:000001">
    <property type="entry name" value="DNA-directed RNA polymerase subunit alpha"/>
    <property type="match status" value="1"/>
</dbReference>
<dbReference type="FunFam" id="2.170.120.12:FF:000001">
    <property type="entry name" value="DNA-directed RNA polymerase subunit alpha"/>
    <property type="match status" value="1"/>
</dbReference>
<dbReference type="Gene3D" id="1.10.150.20">
    <property type="entry name" value="5' to 3' exonuclease, C-terminal subdomain"/>
    <property type="match status" value="1"/>
</dbReference>
<dbReference type="Gene3D" id="2.170.120.12">
    <property type="entry name" value="DNA-directed RNA polymerase, insert domain"/>
    <property type="match status" value="1"/>
</dbReference>
<dbReference type="Gene3D" id="3.30.1360.10">
    <property type="entry name" value="RNA polymerase, RBP11-like subunit"/>
    <property type="match status" value="1"/>
</dbReference>
<dbReference type="HAMAP" id="MF_00059">
    <property type="entry name" value="RNApol_bact_RpoA"/>
    <property type="match status" value="1"/>
</dbReference>
<dbReference type="InterPro" id="IPR011262">
    <property type="entry name" value="DNA-dir_RNA_pol_insert"/>
</dbReference>
<dbReference type="InterPro" id="IPR011263">
    <property type="entry name" value="DNA-dir_RNA_pol_RpoA/D/Rpb3"/>
</dbReference>
<dbReference type="InterPro" id="IPR011773">
    <property type="entry name" value="DNA-dir_RpoA"/>
</dbReference>
<dbReference type="InterPro" id="IPR036603">
    <property type="entry name" value="RBP11-like"/>
</dbReference>
<dbReference type="InterPro" id="IPR011260">
    <property type="entry name" value="RNAP_asu_C"/>
</dbReference>
<dbReference type="InterPro" id="IPR036643">
    <property type="entry name" value="RNApol_insert_sf"/>
</dbReference>
<dbReference type="NCBIfam" id="NF003513">
    <property type="entry name" value="PRK05182.1-2"/>
    <property type="match status" value="1"/>
</dbReference>
<dbReference type="NCBIfam" id="NF003519">
    <property type="entry name" value="PRK05182.2-5"/>
    <property type="match status" value="1"/>
</dbReference>
<dbReference type="NCBIfam" id="TIGR02027">
    <property type="entry name" value="rpoA"/>
    <property type="match status" value="1"/>
</dbReference>
<dbReference type="Pfam" id="PF01000">
    <property type="entry name" value="RNA_pol_A_bac"/>
    <property type="match status" value="1"/>
</dbReference>
<dbReference type="Pfam" id="PF03118">
    <property type="entry name" value="RNA_pol_A_CTD"/>
    <property type="match status" value="1"/>
</dbReference>
<dbReference type="Pfam" id="PF01193">
    <property type="entry name" value="RNA_pol_L"/>
    <property type="match status" value="1"/>
</dbReference>
<dbReference type="SMART" id="SM00662">
    <property type="entry name" value="RPOLD"/>
    <property type="match status" value="1"/>
</dbReference>
<dbReference type="SUPFAM" id="SSF47789">
    <property type="entry name" value="C-terminal domain of RNA polymerase alpha subunit"/>
    <property type="match status" value="1"/>
</dbReference>
<dbReference type="SUPFAM" id="SSF56553">
    <property type="entry name" value="Insert subdomain of RNA polymerase alpha subunit"/>
    <property type="match status" value="1"/>
</dbReference>
<dbReference type="SUPFAM" id="SSF55257">
    <property type="entry name" value="RBP11-like subunits of RNA polymerase"/>
    <property type="match status" value="1"/>
</dbReference>
<protein>
    <recommendedName>
        <fullName evidence="1">DNA-directed RNA polymerase subunit alpha</fullName>
        <shortName evidence="1">RNAP subunit alpha</shortName>
        <ecNumber evidence="1">2.7.7.6</ecNumber>
    </recommendedName>
    <alternativeName>
        <fullName evidence="1">RNA polymerase subunit alpha</fullName>
    </alternativeName>
    <alternativeName>
        <fullName evidence="1">Transcriptase subunit alpha</fullName>
    </alternativeName>
</protein>
<organism>
    <name type="scientific">Rickettsia rickettsii (strain Iowa)</name>
    <dbReference type="NCBI Taxonomy" id="452659"/>
    <lineage>
        <taxon>Bacteria</taxon>
        <taxon>Pseudomonadati</taxon>
        <taxon>Pseudomonadota</taxon>
        <taxon>Alphaproteobacteria</taxon>
        <taxon>Rickettsiales</taxon>
        <taxon>Rickettsiaceae</taxon>
        <taxon>Rickettsieae</taxon>
        <taxon>Rickettsia</taxon>
        <taxon>spotted fever group</taxon>
    </lineage>
</organism>
<accession>B0BUN6</accession>
<keyword id="KW-0240">DNA-directed RNA polymerase</keyword>
<keyword id="KW-0548">Nucleotidyltransferase</keyword>
<keyword id="KW-0804">Transcription</keyword>
<keyword id="KW-0808">Transferase</keyword>